<evidence type="ECO:0000250" key="1"/>
<evidence type="ECO:0000250" key="2">
    <source>
        <dbReference type="UniProtKB" id="P03347"/>
    </source>
</evidence>
<evidence type="ECO:0000250" key="3">
    <source>
        <dbReference type="UniProtKB" id="P03366"/>
    </source>
</evidence>
<evidence type="ECO:0000250" key="4">
    <source>
        <dbReference type="UniProtKB" id="P03367"/>
    </source>
</evidence>
<evidence type="ECO:0000250" key="5">
    <source>
        <dbReference type="UniProtKB" id="P04585"/>
    </source>
</evidence>
<evidence type="ECO:0000250" key="6">
    <source>
        <dbReference type="UniProtKB" id="P12493"/>
    </source>
</evidence>
<evidence type="ECO:0000250" key="7">
    <source>
        <dbReference type="UniProtKB" id="P12497"/>
    </source>
</evidence>
<evidence type="ECO:0000255" key="8"/>
<evidence type="ECO:0000255" key="9">
    <source>
        <dbReference type="PROSITE-ProRule" id="PRU00047"/>
    </source>
</evidence>
<evidence type="ECO:0000255" key="10">
    <source>
        <dbReference type="PROSITE-ProRule" id="PRU00275"/>
    </source>
</evidence>
<evidence type="ECO:0000255" key="11">
    <source>
        <dbReference type="PROSITE-ProRule" id="PRU00405"/>
    </source>
</evidence>
<evidence type="ECO:0000255" key="12">
    <source>
        <dbReference type="PROSITE-ProRule" id="PRU00408"/>
    </source>
</evidence>
<evidence type="ECO:0000255" key="13">
    <source>
        <dbReference type="PROSITE-ProRule" id="PRU00450"/>
    </source>
</evidence>
<evidence type="ECO:0000255" key="14">
    <source>
        <dbReference type="PROSITE-ProRule" id="PRU00457"/>
    </source>
</evidence>
<evidence type="ECO:0000255" key="15">
    <source>
        <dbReference type="PROSITE-ProRule" id="PRU00506"/>
    </source>
</evidence>
<evidence type="ECO:0000255" key="16">
    <source>
        <dbReference type="PROSITE-ProRule" id="PRU10094"/>
    </source>
</evidence>
<evidence type="ECO:0000256" key="17">
    <source>
        <dbReference type="SAM" id="MobiDB-lite"/>
    </source>
</evidence>
<evidence type="ECO:0000305" key="18"/>
<gene>
    <name type="primary">gag-pol</name>
</gene>
<protein>
    <recommendedName>
        <fullName>Gag-Pol polyprotein</fullName>
    </recommendedName>
    <alternativeName>
        <fullName>Pr160Gag-Pol</fullName>
    </alternativeName>
    <component>
        <recommendedName>
            <fullName>Matrix protein p17</fullName>
            <shortName>MA</shortName>
        </recommendedName>
    </component>
    <component>
        <recommendedName>
            <fullName>Capsid protein p24</fullName>
            <shortName>CA</shortName>
        </recommendedName>
    </component>
    <component>
        <recommendedName>
            <fullName evidence="7">Spacer peptide 1</fullName>
            <shortName>SP1</shortName>
        </recommendedName>
        <alternativeName>
            <fullName>p2</fullName>
        </alternativeName>
    </component>
    <component>
        <recommendedName>
            <fullName>Nucleocapsid protein p7</fullName>
            <shortName>NC</shortName>
        </recommendedName>
    </component>
    <component>
        <recommendedName>
            <fullName>Transframe peptide</fullName>
            <shortName>TF</shortName>
        </recommendedName>
    </component>
    <component>
        <recommendedName>
            <fullName>p6-pol</fullName>
            <shortName>p6*</shortName>
        </recommendedName>
    </component>
    <component>
        <recommendedName>
            <fullName>Protease</fullName>
            <ecNumber>3.4.23.16</ecNumber>
        </recommendedName>
        <alternativeName>
            <fullName>PR</fullName>
        </alternativeName>
        <alternativeName>
            <fullName>Retropepsin</fullName>
        </alternativeName>
    </component>
    <component>
        <recommendedName>
            <fullName>Reverse transcriptase/ribonuclease H</fullName>
            <ecNumber>2.7.7.49</ecNumber>
            <ecNumber>2.7.7.7</ecNumber>
            <ecNumber>3.1.26.13</ecNumber>
        </recommendedName>
        <alternativeName>
            <fullName>Exoribonuclease H</fullName>
            <ecNumber>3.1.13.2</ecNumber>
        </alternativeName>
        <alternativeName>
            <fullName>p66 RT</fullName>
        </alternativeName>
    </component>
    <component>
        <recommendedName>
            <fullName>p51 RT</fullName>
        </recommendedName>
    </component>
    <component>
        <recommendedName>
            <fullName>p15</fullName>
        </recommendedName>
    </component>
    <component>
        <recommendedName>
            <fullName>Integrase</fullName>
            <shortName>IN</shortName>
            <ecNumber evidence="5">2.7.7.-</ecNumber>
            <ecNumber evidence="5">3.1.-.-</ecNumber>
        </recommendedName>
    </component>
</protein>
<proteinExistence type="inferred from homology"/>
<feature type="initiator methionine" description="Removed; by host" evidence="1">
    <location>
        <position position="1"/>
    </location>
</feature>
<feature type="chain" id="PRO_0000261263" description="Gag-Pol polyprotein">
    <location>
        <begin position="2"/>
        <end position="1435"/>
    </location>
</feature>
<feature type="chain" id="PRO_0000250973" description="Matrix protein p17" evidence="1">
    <location>
        <begin position="2"/>
        <end position="132"/>
    </location>
</feature>
<feature type="chain" id="PRO_0000250974" description="Capsid protein p24" evidence="1">
    <location>
        <begin position="133"/>
        <end position="363"/>
    </location>
</feature>
<feature type="peptide" id="PRO_0000250975" description="Spacer peptide 1" evidence="1">
    <location>
        <begin position="364"/>
        <end position="377"/>
    </location>
</feature>
<feature type="chain" id="PRO_0000250976" description="Nucleocapsid protein p7" evidence="1">
    <location>
        <begin position="378"/>
        <end position="432"/>
    </location>
</feature>
<feature type="peptide" id="PRO_0000250977" description="Transframe peptide" evidence="8">
    <location>
        <begin position="433"/>
        <end position="440"/>
    </location>
</feature>
<feature type="chain" id="PRO_0000250978" description="p6-pol" evidence="8">
    <location>
        <begin position="441"/>
        <end position="488"/>
    </location>
</feature>
<feature type="chain" id="PRO_0000250979" description="Protease" evidence="1">
    <location>
        <begin position="489"/>
        <end position="587"/>
    </location>
</feature>
<feature type="chain" id="PRO_0000250980" description="Reverse transcriptase/ribonuclease H" evidence="1">
    <location>
        <begin position="588"/>
        <end position="1147"/>
    </location>
</feature>
<feature type="chain" id="PRO_0000250981" description="p51 RT" evidence="1">
    <location>
        <begin position="588"/>
        <end position="1027"/>
    </location>
</feature>
<feature type="chain" id="PRO_0000250982" description="p15" evidence="1">
    <location>
        <begin position="1028"/>
        <end position="1147"/>
    </location>
</feature>
<feature type="chain" id="PRO_0000250983" description="Integrase" evidence="1">
    <location>
        <begin position="1148"/>
        <end position="1435"/>
    </location>
</feature>
<feature type="domain" description="Peptidase A2" evidence="10">
    <location>
        <begin position="508"/>
        <end position="577"/>
    </location>
</feature>
<feature type="domain" description="Reverse transcriptase" evidence="11">
    <location>
        <begin position="631"/>
        <end position="821"/>
    </location>
</feature>
<feature type="domain" description="RNase H type-1" evidence="12">
    <location>
        <begin position="1021"/>
        <end position="1144"/>
    </location>
</feature>
<feature type="domain" description="Integrase catalytic" evidence="14">
    <location>
        <begin position="1201"/>
        <end position="1351"/>
    </location>
</feature>
<feature type="zinc finger region" description="CCHC-type 1" evidence="9">
    <location>
        <begin position="390"/>
        <end position="407"/>
    </location>
</feature>
<feature type="zinc finger region" description="CCHC-type 2" evidence="9">
    <location>
        <begin position="411"/>
        <end position="428"/>
    </location>
</feature>
<feature type="zinc finger region" description="Integrase-type" evidence="13">
    <location>
        <begin position="1150"/>
        <end position="1191"/>
    </location>
</feature>
<feature type="DNA-binding region" description="Integrase-type" evidence="15">
    <location>
        <begin position="1370"/>
        <end position="1417"/>
    </location>
</feature>
<feature type="region of interest" description="Interaction with Gp41" evidence="7">
    <location>
        <begin position="7"/>
        <end position="31"/>
    </location>
</feature>
<feature type="region of interest" description="Interaction with host CALM1" evidence="5">
    <location>
        <begin position="8"/>
        <end position="43"/>
    </location>
</feature>
<feature type="region of interest" description="Interaction with host AP3D1" evidence="7">
    <location>
        <begin position="12"/>
        <end position="19"/>
    </location>
</feature>
<feature type="region of interest" description="Interaction with membrane phosphatidylinositol 4,5-bisphosphate and RNA" evidence="7">
    <location>
        <begin position="14"/>
        <end position="33"/>
    </location>
</feature>
<feature type="region of interest" description="Interaction with membrane phosphatidylinositol 4,5-bisphosphate" evidence="7">
    <location>
        <begin position="73"/>
        <end position="77"/>
    </location>
</feature>
<feature type="region of interest" description="Disordered" evidence="17">
    <location>
        <begin position="106"/>
        <end position="127"/>
    </location>
</feature>
<feature type="region of interest" description="Interaction with human PPIA/CYPA and NUP153" evidence="7">
    <location>
        <begin position="189"/>
        <end position="227"/>
    </location>
</feature>
<feature type="region of interest" description="Dimerization/Multimerization of capsid protein p24" evidence="5">
    <location>
        <begin position="277"/>
        <end position="363"/>
    </location>
</feature>
<feature type="region of interest" description="Dimerization of protease" evidence="5">
    <location>
        <begin position="489"/>
        <end position="493"/>
    </location>
</feature>
<feature type="region of interest" description="Dimerization of protease" evidence="5">
    <location>
        <begin position="537"/>
        <end position="543"/>
    </location>
</feature>
<feature type="region of interest" description="Dimerization of protease" evidence="5">
    <location>
        <begin position="576"/>
        <end position="588"/>
    </location>
</feature>
<feature type="region of interest" description="RT 'primer grip'" evidence="1">
    <location>
        <begin position="814"/>
        <end position="822"/>
    </location>
</feature>
<feature type="short sequence motif" description="Nuclear export signal" evidence="1">
    <location>
        <begin position="16"/>
        <end position="22"/>
    </location>
</feature>
<feature type="short sequence motif" description="Nuclear localization signal" evidence="1">
    <location>
        <begin position="26"/>
        <end position="32"/>
    </location>
</feature>
<feature type="short sequence motif" description="Tryptophan repeat motif" evidence="1">
    <location>
        <begin position="985"/>
        <end position="1001"/>
    </location>
</feature>
<feature type="active site" description="For protease activity; shared with dimeric partner" evidence="16">
    <location>
        <position position="513"/>
    </location>
</feature>
<feature type="binding site" evidence="1">
    <location>
        <position position="697"/>
    </location>
    <ligand>
        <name>Mg(2+)</name>
        <dbReference type="ChEBI" id="CHEBI:18420"/>
        <label>1</label>
        <note>catalytic; for reverse transcriptase activity</note>
    </ligand>
</feature>
<feature type="binding site" evidence="1">
    <location>
        <position position="772"/>
    </location>
    <ligand>
        <name>Mg(2+)</name>
        <dbReference type="ChEBI" id="CHEBI:18420"/>
        <label>1</label>
        <note>catalytic; for reverse transcriptase activity</note>
    </ligand>
</feature>
<feature type="binding site" evidence="1">
    <location>
        <position position="773"/>
    </location>
    <ligand>
        <name>Mg(2+)</name>
        <dbReference type="ChEBI" id="CHEBI:18420"/>
        <label>1</label>
        <note>catalytic; for reverse transcriptase activity</note>
    </ligand>
</feature>
<feature type="binding site" evidence="1">
    <location>
        <position position="1030"/>
    </location>
    <ligand>
        <name>Mg(2+)</name>
        <dbReference type="ChEBI" id="CHEBI:18420"/>
        <label>2</label>
        <note>catalytic; for RNase H activity</note>
    </ligand>
</feature>
<feature type="binding site" evidence="1">
    <location>
        <position position="1065"/>
    </location>
    <ligand>
        <name>Mg(2+)</name>
        <dbReference type="ChEBI" id="CHEBI:18420"/>
        <label>2</label>
        <note>catalytic; for RNase H activity</note>
    </ligand>
</feature>
<feature type="binding site" evidence="1">
    <location>
        <position position="1085"/>
    </location>
    <ligand>
        <name>Mg(2+)</name>
        <dbReference type="ChEBI" id="CHEBI:18420"/>
        <label>2</label>
        <note>catalytic; for RNase H activity</note>
    </ligand>
</feature>
<feature type="binding site" evidence="1">
    <location>
        <position position="1136"/>
    </location>
    <ligand>
        <name>Mg(2+)</name>
        <dbReference type="ChEBI" id="CHEBI:18420"/>
        <label>2</label>
        <note>catalytic; for RNase H activity</note>
    </ligand>
</feature>
<feature type="binding site" evidence="13">
    <location>
        <position position="1159"/>
    </location>
    <ligand>
        <name>Zn(2+)</name>
        <dbReference type="ChEBI" id="CHEBI:29105"/>
    </ligand>
</feature>
<feature type="binding site" evidence="13">
    <location>
        <position position="1163"/>
    </location>
    <ligand>
        <name>Zn(2+)</name>
        <dbReference type="ChEBI" id="CHEBI:29105"/>
    </ligand>
</feature>
<feature type="binding site" evidence="13">
    <location>
        <position position="1187"/>
    </location>
    <ligand>
        <name>Zn(2+)</name>
        <dbReference type="ChEBI" id="CHEBI:29105"/>
    </ligand>
</feature>
<feature type="binding site" evidence="13">
    <location>
        <position position="1190"/>
    </location>
    <ligand>
        <name>Zn(2+)</name>
        <dbReference type="ChEBI" id="CHEBI:29105"/>
    </ligand>
</feature>
<feature type="binding site" evidence="1">
    <location>
        <position position="1211"/>
    </location>
    <ligand>
        <name>Mg(2+)</name>
        <dbReference type="ChEBI" id="CHEBI:18420"/>
        <label>3</label>
        <note>catalytic; for integrase activity</note>
    </ligand>
</feature>
<feature type="binding site" evidence="1">
    <location>
        <position position="1263"/>
    </location>
    <ligand>
        <name>Mg(2+)</name>
        <dbReference type="ChEBI" id="CHEBI:18420"/>
        <label>3</label>
        <note>catalytic; for integrase activity</note>
    </ligand>
</feature>
<feature type="binding site" evidence="5">
    <location>
        <position position="1299"/>
    </location>
    <ligand>
        <name>Mg(2+)</name>
        <dbReference type="ChEBI" id="CHEBI:18420"/>
        <label>3</label>
        <note>catalytic; for integrase activity</note>
    </ligand>
</feature>
<feature type="site" description="Cleavage; by viral protease" evidence="1">
    <location>
        <begin position="132"/>
        <end position="133"/>
    </location>
</feature>
<feature type="site" description="Cis/trans isomerization of proline peptide bond; by human PPIA/CYPA" evidence="1">
    <location>
        <begin position="221"/>
        <end position="222"/>
    </location>
</feature>
<feature type="site" description="Cleavage; by viral protease" evidence="1">
    <location>
        <begin position="363"/>
        <end position="364"/>
    </location>
</feature>
<feature type="site" description="Cleavage; by viral protease" evidence="1">
    <location>
        <begin position="377"/>
        <end position="378"/>
    </location>
</feature>
<feature type="site" description="Cleavage; by viral protease" evidence="8">
    <location>
        <begin position="432"/>
        <end position="433"/>
    </location>
</feature>
<feature type="site" description="Cleavage; by viral protease" evidence="1">
    <location>
        <begin position="440"/>
        <end position="441"/>
    </location>
</feature>
<feature type="site" description="Cleavage; by viral protease" evidence="1">
    <location>
        <begin position="488"/>
        <end position="489"/>
    </location>
</feature>
<feature type="site" description="Cleavage; by viral protease" evidence="1">
    <location>
        <begin position="587"/>
        <end position="588"/>
    </location>
</feature>
<feature type="site" description="Essential for RT p66/p51 heterodimerization" evidence="1">
    <location>
        <position position="988"/>
    </location>
</feature>
<feature type="site" description="Essential for RT p66/p51 heterodimerization" evidence="1">
    <location>
        <position position="1001"/>
    </location>
</feature>
<feature type="site" description="Cleavage; by viral protease; partial" evidence="1">
    <location>
        <begin position="1027"/>
        <end position="1028"/>
    </location>
</feature>
<feature type="site" description="Cleavage; by viral protease" evidence="1">
    <location>
        <begin position="1147"/>
        <end position="1148"/>
    </location>
</feature>
<feature type="modified residue" description="Phosphotyrosine; by host" evidence="1">
    <location>
        <position position="132"/>
    </location>
</feature>
<feature type="lipid moiety-binding region" description="N-myristoyl glycine; by host" evidence="1">
    <location>
        <position position="2"/>
    </location>
</feature>
<reference key="1">
    <citation type="journal article" date="1992" name="J. Virol.">
        <title>An infectious molecular clone of an unusual macrophage-tropic and highly cytopathic strain of human immunodeficiency virus type 1.</title>
        <authorList>
            <person name="Collman R."/>
            <person name="Balliet J.W."/>
            <person name="Gregory S.A."/>
            <person name="Friedman H."/>
            <person name="Kolson D.L."/>
            <person name="Nathanson N."/>
            <person name="Srinivasan A."/>
        </authorList>
    </citation>
    <scope>NUCLEOTIDE SEQUENCE [GENOMIC DNA]</scope>
</reference>
<organism>
    <name type="scientific">Human immunodeficiency virus type 1 group M subtype B (strain 89.6)</name>
    <name type="common">HIV-1</name>
    <dbReference type="NCBI Taxonomy" id="401671"/>
    <lineage>
        <taxon>Viruses</taxon>
        <taxon>Riboviria</taxon>
        <taxon>Pararnavirae</taxon>
        <taxon>Artverviricota</taxon>
        <taxon>Revtraviricetes</taxon>
        <taxon>Ortervirales</taxon>
        <taxon>Retroviridae</taxon>
        <taxon>Orthoretrovirinae</taxon>
        <taxon>Lentivirus</taxon>
        <taxon>Human immunodeficiency virus type 1</taxon>
    </lineage>
</organism>
<dbReference type="EC" id="3.4.23.16"/>
<dbReference type="EC" id="2.7.7.49"/>
<dbReference type="EC" id="2.7.7.7"/>
<dbReference type="EC" id="3.1.26.13"/>
<dbReference type="EC" id="3.1.13.2"/>
<dbReference type="EC" id="2.7.7.-" evidence="5"/>
<dbReference type="EC" id="3.1.-.-" evidence="5"/>
<dbReference type="EMBL" id="U39362">
    <property type="protein sequence ID" value="AAA81037.1"/>
    <property type="molecule type" value="Genomic_DNA"/>
</dbReference>
<dbReference type="PIR" id="A47330">
    <property type="entry name" value="A47330"/>
</dbReference>
<dbReference type="PIR" id="B47330">
    <property type="entry name" value="B47330"/>
</dbReference>
<dbReference type="PIR" id="C47330">
    <property type="entry name" value="C47330"/>
</dbReference>
<dbReference type="PIR" id="D47330">
    <property type="entry name" value="D47330"/>
</dbReference>
<dbReference type="PIR" id="F47330">
    <property type="entry name" value="F47330"/>
</dbReference>
<dbReference type="PIR" id="S32132">
    <property type="entry name" value="S32132"/>
</dbReference>
<dbReference type="SMR" id="Q73368"/>
<dbReference type="MEROPS" id="A02.001"/>
<dbReference type="PRO" id="PR:Q73368"/>
<dbReference type="Proteomes" id="UP000007691">
    <property type="component" value="Genome"/>
</dbReference>
<dbReference type="GO" id="GO:0043657">
    <property type="term" value="C:host cell"/>
    <property type="evidence" value="ECO:0007669"/>
    <property type="project" value="GOC"/>
</dbReference>
<dbReference type="GO" id="GO:0042025">
    <property type="term" value="C:host cell nucleus"/>
    <property type="evidence" value="ECO:0007669"/>
    <property type="project" value="UniProtKB-SubCell"/>
</dbReference>
<dbReference type="GO" id="GO:0020002">
    <property type="term" value="C:host cell plasma membrane"/>
    <property type="evidence" value="ECO:0007669"/>
    <property type="project" value="UniProtKB-SubCell"/>
</dbReference>
<dbReference type="GO" id="GO:0072494">
    <property type="term" value="C:host multivesicular body"/>
    <property type="evidence" value="ECO:0007669"/>
    <property type="project" value="UniProtKB-SubCell"/>
</dbReference>
<dbReference type="GO" id="GO:0016020">
    <property type="term" value="C:membrane"/>
    <property type="evidence" value="ECO:0007669"/>
    <property type="project" value="UniProtKB-KW"/>
</dbReference>
<dbReference type="GO" id="GO:0019013">
    <property type="term" value="C:viral nucleocapsid"/>
    <property type="evidence" value="ECO:0007669"/>
    <property type="project" value="UniProtKB-KW"/>
</dbReference>
<dbReference type="GO" id="GO:0055036">
    <property type="term" value="C:virion membrane"/>
    <property type="evidence" value="ECO:0007669"/>
    <property type="project" value="UniProtKB-SubCell"/>
</dbReference>
<dbReference type="GO" id="GO:0004190">
    <property type="term" value="F:aspartic-type endopeptidase activity"/>
    <property type="evidence" value="ECO:0007669"/>
    <property type="project" value="UniProtKB-KW"/>
</dbReference>
<dbReference type="GO" id="GO:0003677">
    <property type="term" value="F:DNA binding"/>
    <property type="evidence" value="ECO:0007669"/>
    <property type="project" value="UniProtKB-KW"/>
</dbReference>
<dbReference type="GO" id="GO:0003887">
    <property type="term" value="F:DNA-directed DNA polymerase activity"/>
    <property type="evidence" value="ECO:0007669"/>
    <property type="project" value="UniProtKB-KW"/>
</dbReference>
<dbReference type="GO" id="GO:0004533">
    <property type="term" value="F:exoribonuclease H activity"/>
    <property type="evidence" value="ECO:0007669"/>
    <property type="project" value="UniProtKB-EC"/>
</dbReference>
<dbReference type="GO" id="GO:0008289">
    <property type="term" value="F:lipid binding"/>
    <property type="evidence" value="ECO:0007669"/>
    <property type="project" value="UniProtKB-KW"/>
</dbReference>
<dbReference type="GO" id="GO:0035613">
    <property type="term" value="F:RNA stem-loop binding"/>
    <property type="evidence" value="ECO:0007669"/>
    <property type="project" value="TreeGrafter"/>
</dbReference>
<dbReference type="GO" id="GO:0003964">
    <property type="term" value="F:RNA-directed DNA polymerase activity"/>
    <property type="evidence" value="ECO:0007669"/>
    <property type="project" value="UniProtKB-KW"/>
</dbReference>
<dbReference type="GO" id="GO:0004523">
    <property type="term" value="F:RNA-DNA hybrid ribonuclease activity"/>
    <property type="evidence" value="ECO:0007669"/>
    <property type="project" value="InterPro"/>
</dbReference>
<dbReference type="GO" id="GO:0005198">
    <property type="term" value="F:structural molecule activity"/>
    <property type="evidence" value="ECO:0007669"/>
    <property type="project" value="InterPro"/>
</dbReference>
<dbReference type="GO" id="GO:0008270">
    <property type="term" value="F:zinc ion binding"/>
    <property type="evidence" value="ECO:0007669"/>
    <property type="project" value="UniProtKB-KW"/>
</dbReference>
<dbReference type="GO" id="GO:0015074">
    <property type="term" value="P:DNA integration"/>
    <property type="evidence" value="ECO:0007669"/>
    <property type="project" value="UniProtKB-KW"/>
</dbReference>
<dbReference type="GO" id="GO:0006310">
    <property type="term" value="P:DNA recombination"/>
    <property type="evidence" value="ECO:0007669"/>
    <property type="project" value="UniProtKB-KW"/>
</dbReference>
<dbReference type="GO" id="GO:0075713">
    <property type="term" value="P:establishment of integrated proviral latency"/>
    <property type="evidence" value="ECO:0007669"/>
    <property type="project" value="UniProtKB-KW"/>
</dbReference>
<dbReference type="GO" id="GO:0006508">
    <property type="term" value="P:proteolysis"/>
    <property type="evidence" value="ECO:0007669"/>
    <property type="project" value="UniProtKB-KW"/>
</dbReference>
<dbReference type="GO" id="GO:0046718">
    <property type="term" value="P:symbiont entry into host cell"/>
    <property type="evidence" value="ECO:0007669"/>
    <property type="project" value="UniProtKB-KW"/>
</dbReference>
<dbReference type="GO" id="GO:0052151">
    <property type="term" value="P:symbiont-mediated activation of host apoptosis"/>
    <property type="evidence" value="ECO:0007669"/>
    <property type="project" value="UniProtKB-KW"/>
</dbReference>
<dbReference type="GO" id="GO:0039657">
    <property type="term" value="P:symbiont-mediated suppression of host gene expression"/>
    <property type="evidence" value="ECO:0007669"/>
    <property type="project" value="UniProtKB-KW"/>
</dbReference>
<dbReference type="GO" id="GO:0044826">
    <property type="term" value="P:viral genome integration into host DNA"/>
    <property type="evidence" value="ECO:0007669"/>
    <property type="project" value="UniProtKB-KW"/>
</dbReference>
<dbReference type="GO" id="GO:0075732">
    <property type="term" value="P:viral penetration into host nucleus"/>
    <property type="evidence" value="ECO:0007669"/>
    <property type="project" value="UniProtKB-KW"/>
</dbReference>
<dbReference type="GO" id="GO:0075523">
    <property type="term" value="P:viral translational frameshifting"/>
    <property type="evidence" value="ECO:0007669"/>
    <property type="project" value="UniProtKB-KW"/>
</dbReference>
<dbReference type="CDD" id="cd05482">
    <property type="entry name" value="HIV_retropepsin_like"/>
    <property type="match status" value="1"/>
</dbReference>
<dbReference type="CDD" id="cd01645">
    <property type="entry name" value="RT_Rtv"/>
    <property type="match status" value="1"/>
</dbReference>
<dbReference type="FunFam" id="1.10.1200.30:FF:000001">
    <property type="entry name" value="Gag polyprotein"/>
    <property type="match status" value="1"/>
</dbReference>
<dbReference type="FunFam" id="1.10.150.90:FF:000001">
    <property type="entry name" value="Gag polyprotein"/>
    <property type="match status" value="1"/>
</dbReference>
<dbReference type="FunFam" id="1.10.375.10:FF:000001">
    <property type="entry name" value="Gag polyprotein"/>
    <property type="match status" value="1"/>
</dbReference>
<dbReference type="FunFam" id="1.20.5.760:FF:000001">
    <property type="entry name" value="Gag polyprotein"/>
    <property type="match status" value="1"/>
</dbReference>
<dbReference type="FunFam" id="4.10.60.10:FF:000001">
    <property type="entry name" value="Gag polyprotein"/>
    <property type="match status" value="1"/>
</dbReference>
<dbReference type="FunFam" id="2.40.70.10:FF:000001">
    <property type="entry name" value="Gag-Pol polyprotein"/>
    <property type="match status" value="1"/>
</dbReference>
<dbReference type="FunFam" id="3.30.420.10:FF:000025">
    <property type="entry name" value="Gag-Pol polyprotein"/>
    <property type="match status" value="1"/>
</dbReference>
<dbReference type="FunFam" id="2.30.30.10:FF:000001">
    <property type="entry name" value="POL polyprotein"/>
    <property type="match status" value="1"/>
</dbReference>
<dbReference type="FunFam" id="3.30.420.10:FF:000017">
    <property type="entry name" value="POL polyprotein"/>
    <property type="match status" value="1"/>
</dbReference>
<dbReference type="FunFam" id="3.30.70.270:FF:000016">
    <property type="entry name" value="POL polyprotein"/>
    <property type="match status" value="1"/>
</dbReference>
<dbReference type="Gene3D" id="1.10.10.200">
    <property type="match status" value="1"/>
</dbReference>
<dbReference type="Gene3D" id="1.10.1200.30">
    <property type="match status" value="1"/>
</dbReference>
<dbReference type="Gene3D" id="3.30.70.270">
    <property type="match status" value="3"/>
</dbReference>
<dbReference type="Gene3D" id="2.40.70.10">
    <property type="entry name" value="Acid Proteases"/>
    <property type="match status" value="1"/>
</dbReference>
<dbReference type="Gene3D" id="3.10.10.10">
    <property type="entry name" value="HIV Type 1 Reverse Transcriptase, subunit A, domain 1"/>
    <property type="match status" value="1"/>
</dbReference>
<dbReference type="Gene3D" id="1.10.375.10">
    <property type="entry name" value="Human Immunodeficiency Virus Type 1 Capsid Protein"/>
    <property type="match status" value="1"/>
</dbReference>
<dbReference type="Gene3D" id="1.10.150.90">
    <property type="entry name" value="Immunodeficiency lentiviruses, gag gene matrix protein p17"/>
    <property type="match status" value="1"/>
</dbReference>
<dbReference type="Gene3D" id="2.30.30.10">
    <property type="entry name" value="Integrase, C-terminal domain superfamily, retroviral"/>
    <property type="match status" value="1"/>
</dbReference>
<dbReference type="Gene3D" id="3.30.420.10">
    <property type="entry name" value="Ribonuclease H-like superfamily/Ribonuclease H"/>
    <property type="match status" value="2"/>
</dbReference>
<dbReference type="Gene3D" id="1.20.5.760">
    <property type="entry name" value="Single helix bin"/>
    <property type="match status" value="1"/>
</dbReference>
<dbReference type="Gene3D" id="4.10.60.10">
    <property type="entry name" value="Zinc finger, CCHC-type"/>
    <property type="match status" value="1"/>
</dbReference>
<dbReference type="InterPro" id="IPR001969">
    <property type="entry name" value="Aspartic_peptidase_AS"/>
</dbReference>
<dbReference type="InterPro" id="IPR043502">
    <property type="entry name" value="DNA/RNA_pol_sf"/>
</dbReference>
<dbReference type="InterPro" id="IPR045345">
    <property type="entry name" value="Gag_p24_C"/>
</dbReference>
<dbReference type="InterPro" id="IPR017856">
    <property type="entry name" value="Integrase-like_N"/>
</dbReference>
<dbReference type="InterPro" id="IPR036862">
    <property type="entry name" value="Integrase_C_dom_sf_retrovir"/>
</dbReference>
<dbReference type="InterPro" id="IPR001037">
    <property type="entry name" value="Integrase_C_retrovir"/>
</dbReference>
<dbReference type="InterPro" id="IPR001584">
    <property type="entry name" value="Integrase_cat-core"/>
</dbReference>
<dbReference type="InterPro" id="IPR003308">
    <property type="entry name" value="Integrase_Zn-bd_dom_N"/>
</dbReference>
<dbReference type="InterPro" id="IPR000071">
    <property type="entry name" value="Lentvrl_matrix_N"/>
</dbReference>
<dbReference type="InterPro" id="IPR012344">
    <property type="entry name" value="Matrix_HIV/RSV_N"/>
</dbReference>
<dbReference type="InterPro" id="IPR001995">
    <property type="entry name" value="Peptidase_A2_cat"/>
</dbReference>
<dbReference type="InterPro" id="IPR021109">
    <property type="entry name" value="Peptidase_aspartic_dom_sf"/>
</dbReference>
<dbReference type="InterPro" id="IPR034170">
    <property type="entry name" value="Retropepsin-like_cat_dom"/>
</dbReference>
<dbReference type="InterPro" id="IPR018061">
    <property type="entry name" value="Retropepsins"/>
</dbReference>
<dbReference type="InterPro" id="IPR008916">
    <property type="entry name" value="Retrov_capsid_C"/>
</dbReference>
<dbReference type="InterPro" id="IPR008919">
    <property type="entry name" value="Retrov_capsid_N"/>
</dbReference>
<dbReference type="InterPro" id="IPR010999">
    <property type="entry name" value="Retrovr_matrix"/>
</dbReference>
<dbReference type="InterPro" id="IPR043128">
    <property type="entry name" value="Rev_trsase/Diguanyl_cyclase"/>
</dbReference>
<dbReference type="InterPro" id="IPR012337">
    <property type="entry name" value="RNaseH-like_sf"/>
</dbReference>
<dbReference type="InterPro" id="IPR002156">
    <property type="entry name" value="RNaseH_domain"/>
</dbReference>
<dbReference type="InterPro" id="IPR036397">
    <property type="entry name" value="RNaseH_sf"/>
</dbReference>
<dbReference type="InterPro" id="IPR000477">
    <property type="entry name" value="RT_dom"/>
</dbReference>
<dbReference type="InterPro" id="IPR010659">
    <property type="entry name" value="RVT_connect"/>
</dbReference>
<dbReference type="InterPro" id="IPR010661">
    <property type="entry name" value="RVT_thumb"/>
</dbReference>
<dbReference type="InterPro" id="IPR001878">
    <property type="entry name" value="Znf_CCHC"/>
</dbReference>
<dbReference type="InterPro" id="IPR036875">
    <property type="entry name" value="Znf_CCHC_sf"/>
</dbReference>
<dbReference type="PANTHER" id="PTHR41694">
    <property type="entry name" value="ENDOGENOUS RETROVIRUS GROUP K MEMBER POL PROTEIN"/>
    <property type="match status" value="1"/>
</dbReference>
<dbReference type="PANTHER" id="PTHR41694:SF3">
    <property type="entry name" value="RNA-DIRECTED DNA POLYMERASE-RELATED"/>
    <property type="match status" value="1"/>
</dbReference>
<dbReference type="Pfam" id="PF00540">
    <property type="entry name" value="Gag_p17"/>
    <property type="match status" value="1"/>
</dbReference>
<dbReference type="Pfam" id="PF19317">
    <property type="entry name" value="Gag_p24_C"/>
    <property type="match status" value="1"/>
</dbReference>
<dbReference type="Pfam" id="PF00552">
    <property type="entry name" value="IN_DBD_C"/>
    <property type="match status" value="1"/>
</dbReference>
<dbReference type="Pfam" id="PF02022">
    <property type="entry name" value="Integrase_Zn"/>
    <property type="match status" value="1"/>
</dbReference>
<dbReference type="Pfam" id="PF00075">
    <property type="entry name" value="RNase_H"/>
    <property type="match status" value="1"/>
</dbReference>
<dbReference type="Pfam" id="PF00665">
    <property type="entry name" value="rve"/>
    <property type="match status" value="1"/>
</dbReference>
<dbReference type="Pfam" id="PF00077">
    <property type="entry name" value="RVP"/>
    <property type="match status" value="1"/>
</dbReference>
<dbReference type="Pfam" id="PF00078">
    <property type="entry name" value="RVT_1"/>
    <property type="match status" value="1"/>
</dbReference>
<dbReference type="Pfam" id="PF06815">
    <property type="entry name" value="RVT_connect"/>
    <property type="match status" value="1"/>
</dbReference>
<dbReference type="Pfam" id="PF06817">
    <property type="entry name" value="RVT_thumb"/>
    <property type="match status" value="1"/>
</dbReference>
<dbReference type="Pfam" id="PF00098">
    <property type="entry name" value="zf-CCHC"/>
    <property type="match status" value="2"/>
</dbReference>
<dbReference type="PRINTS" id="PR00234">
    <property type="entry name" value="HIV1MATRIX"/>
</dbReference>
<dbReference type="SMART" id="SM00343">
    <property type="entry name" value="ZnF_C2HC"/>
    <property type="match status" value="2"/>
</dbReference>
<dbReference type="SUPFAM" id="SSF50630">
    <property type="entry name" value="Acid proteases"/>
    <property type="match status" value="1"/>
</dbReference>
<dbReference type="SUPFAM" id="SSF50122">
    <property type="entry name" value="DNA-binding domain of retroviral integrase"/>
    <property type="match status" value="1"/>
</dbReference>
<dbReference type="SUPFAM" id="SSF56672">
    <property type="entry name" value="DNA/RNA polymerases"/>
    <property type="match status" value="1"/>
</dbReference>
<dbReference type="SUPFAM" id="SSF46919">
    <property type="entry name" value="N-terminal Zn binding domain of HIV integrase"/>
    <property type="match status" value="1"/>
</dbReference>
<dbReference type="SUPFAM" id="SSF47836">
    <property type="entry name" value="Retroviral matrix proteins"/>
    <property type="match status" value="1"/>
</dbReference>
<dbReference type="SUPFAM" id="SSF47353">
    <property type="entry name" value="Retrovirus capsid dimerization domain-like"/>
    <property type="match status" value="1"/>
</dbReference>
<dbReference type="SUPFAM" id="SSF47943">
    <property type="entry name" value="Retrovirus capsid protein, N-terminal core domain"/>
    <property type="match status" value="1"/>
</dbReference>
<dbReference type="SUPFAM" id="SSF57756">
    <property type="entry name" value="Retrovirus zinc finger-like domains"/>
    <property type="match status" value="1"/>
</dbReference>
<dbReference type="SUPFAM" id="SSF53098">
    <property type="entry name" value="Ribonuclease H-like"/>
    <property type="match status" value="2"/>
</dbReference>
<dbReference type="PROSITE" id="PS50175">
    <property type="entry name" value="ASP_PROT_RETROV"/>
    <property type="match status" value="1"/>
</dbReference>
<dbReference type="PROSITE" id="PS00141">
    <property type="entry name" value="ASP_PROTEASE"/>
    <property type="match status" value="1"/>
</dbReference>
<dbReference type="PROSITE" id="PS50994">
    <property type="entry name" value="INTEGRASE"/>
    <property type="match status" value="1"/>
</dbReference>
<dbReference type="PROSITE" id="PS51027">
    <property type="entry name" value="INTEGRASE_DBD"/>
    <property type="match status" value="1"/>
</dbReference>
<dbReference type="PROSITE" id="PS50879">
    <property type="entry name" value="RNASE_H_1"/>
    <property type="match status" value="1"/>
</dbReference>
<dbReference type="PROSITE" id="PS50878">
    <property type="entry name" value="RT_POL"/>
    <property type="match status" value="1"/>
</dbReference>
<dbReference type="PROSITE" id="PS50158">
    <property type="entry name" value="ZF_CCHC"/>
    <property type="match status" value="2"/>
</dbReference>
<dbReference type="PROSITE" id="PS50876">
    <property type="entry name" value="ZF_INTEGRASE"/>
    <property type="match status" value="1"/>
</dbReference>
<keyword id="KW-1073">Activation of host caspases by virus</keyword>
<keyword id="KW-0014">AIDS</keyword>
<keyword id="KW-0064">Aspartyl protease</keyword>
<keyword id="KW-0167">Capsid protein</keyword>
<keyword id="KW-0229">DNA integration</keyword>
<keyword id="KW-0233">DNA recombination</keyword>
<keyword id="KW-0238">DNA-binding</keyword>
<keyword id="KW-0239">DNA-directed DNA polymerase</keyword>
<keyword id="KW-0255">Endonuclease</keyword>
<keyword id="KW-1262">Eukaryotic host gene expression shutoff by virus</keyword>
<keyword id="KW-1193">Eukaryotic host translation shutoff by virus</keyword>
<keyword id="KW-1032">Host cell membrane</keyword>
<keyword id="KW-1035">Host cytoplasm</keyword>
<keyword id="KW-1039">Host endosome</keyword>
<keyword id="KW-1190">Host gene expression shutoff by virus</keyword>
<keyword id="KW-1043">Host membrane</keyword>
<keyword id="KW-1048">Host nucleus</keyword>
<keyword id="KW-0945">Host-virus interaction</keyword>
<keyword id="KW-0378">Hydrolase</keyword>
<keyword id="KW-0446">Lipid-binding</keyword>
<keyword id="KW-0449">Lipoprotein</keyword>
<keyword id="KW-0460">Magnesium</keyword>
<keyword id="KW-0472">Membrane</keyword>
<keyword id="KW-0479">Metal-binding</keyword>
<keyword id="KW-1119">Modulation of host cell apoptosis by virus</keyword>
<keyword id="KW-0511">Multifunctional enzyme</keyword>
<keyword id="KW-0519">Myristate</keyword>
<keyword id="KW-0540">Nuclease</keyword>
<keyword id="KW-0548">Nucleotidyltransferase</keyword>
<keyword id="KW-0597">Phosphoprotein</keyword>
<keyword id="KW-0645">Protease</keyword>
<keyword id="KW-1185">Reference proteome</keyword>
<keyword id="KW-0677">Repeat</keyword>
<keyword id="KW-0688">Ribosomal frameshifting</keyword>
<keyword id="KW-0694">RNA-binding</keyword>
<keyword id="KW-0695">RNA-directed DNA polymerase</keyword>
<keyword id="KW-0808">Transferase</keyword>
<keyword id="KW-1179">Viral genome integration</keyword>
<keyword id="KW-0543">Viral nucleoprotein</keyword>
<keyword id="KW-1163">Viral penetration into host nucleus</keyword>
<keyword id="KW-1188">Viral release from host cell</keyword>
<keyword id="KW-0946">Virion</keyword>
<keyword id="KW-0917">Virion maturation</keyword>
<keyword id="KW-1160">Virus entry into host cell</keyword>
<keyword id="KW-0862">Zinc</keyword>
<keyword id="KW-0863">Zinc-finger</keyword>
<name>POL_HV1B9</name>
<sequence>MGARASVLSGGELDRWEKIRLRPGGKKKYKLKHIVWASRELERFAVNPSLLETSEGCRQILGQLQSSLQTGSEELKSLYNTVATLYCVHQRIEVKDTKEALDKIEEEQNKSKKKAQQAAADTGNSSQVSQNYPIVQNIQGQMVHQAISPRTLNAWVKVVEEKAFSPEVIPMFSALSEGATPQDLNTMLNTVGGHQAAMQMLKETINEEAAEWDRLHPVQAGPVAPGQMREPRGSDIAGTTSTLQEQIGWMTNNPPIPVGEIYKRWIILGLNKIVRMYSPSSILDIKQGPKEPFRDYVDRFYKTLRAEQASQEVKNWMTETLLVQNANPDCKTILKALGPGATLEEMMTACQGVGGPGHKARVLAEAMSQVTNSATIMMQRGNFRNQRKTVKCFNCGKEGHIAKNCRAPRKKGCWKCGKEGHQMKDCTERQANFFRENLAFPQGKAREFSSEQTRANSPTRRELQVWGGDNNSLSEAGADRQGTVSLSFPQITLWQRPLVTIKVGGQLKEALLDTGADDTVLEDMSLPGRWKPKMIGGIGGFIKVRQYEQIDIEICGHKAKGTVLVGPTPVNIIGRNLLTQIGCTLNFPISPIETVPVKLKPGMDGPKVKQWPLTEEKIKALVEICTEMEKEGKISKIGPENPYNTPVFAIKKKDSTKWRKLVDFRELNKRTQDFWEVQLGIPHPAGLKKKKSVTVLDVGDAYFSVPLDEDFRKYTAFTIPSINNETPGIRYQYNVLPQGWKGSPAIFQSSMTKILEPFRKQNPDIVIYQYMDDLYVGSDLEIGQHRAKIEDLRQHLLKWGFTTPDKKHQKEPPFLWMGYELHPDKWTVQPIVLPEKDSWTVNDIQKLVGKLNWASQIYAGIKVKQLCKLLRGTKALTEVVPLTEEAELELAENREILKEPVHGVYYDPTKDLIAELQKQGQGQWTYQIYQEPYKNLKTGKYARMRGAHTNDVKQLTEAVQKIATESIVIWGKTPKFKLPIQKETWEAWWTDYWQATWIPEWEFVNTPPLVKLWYQLEKEPIVGAETFYVDGAANRDTKSGKAGYVTDRGRQKVVSLADTTNQKTELQAIHLALQDSGLEVNIVTDSQYALGIIQAQPDKSESELVSQIIEQLIKKEKVYLAWVPAHKGIGGNEQVDKLVSAGIRKVLFLDGIDKAQEEHEKYHTNWRAMASDFNLPPVVAKEIVASCNKCQLKGEAMHGQVDCSPGIWQLDCTHLEGKVILVAVHVASGYIEAEVIPAETGQETAYFLLKLAGRWPVKTIHTDNGSNFTSTTVKAACWWAGIKQEFGIPYNPQSQGVVESMNKELKKIIGQVRDQAEHLKTAVQMAVFIHNFKRKGGIGGYSAGERIVDIIASDIQTKELQKQITKIQNFRVYYRDSRDPLWKGPAKLLWKGEGAVVIQDNSDIKVVPRRKAKIIRDYGKQMAGDDCVASRQDED</sequence>
<organismHost>
    <name type="scientific">Homo sapiens</name>
    <name type="common">Human</name>
    <dbReference type="NCBI Taxonomy" id="9606"/>
</organismHost>
<accession>Q73368</accession>
<comment type="function">
    <molecule>Gag-Pol polyprotein</molecule>
    <text evidence="1">Mediates, with Gag polyprotein, the essential events in virion assembly, including binding the plasma membrane, making the protein-protein interactions necessary to create spherical particles, recruiting the viral Env proteins, and packaging the genomic RNA via direct interactions with the RNA packaging sequence (Psi). Gag-Pol polyprotein may regulate its own translation, by the binding genomic RNA in the 5'-UTR. At low concentration, the polyprotein would promote translation, whereas at high concentration, the polyprotein would encapsidate genomic RNA and then shut off translation.</text>
</comment>
<comment type="function">
    <molecule>Matrix protein p17</molecule>
    <text evidence="7">Targets the polyprotein to the plasma membrane via a multipartite membrane-binding signal, that includes its myristoylated N-terminus. Matrix protein is part of the pre-integration complex. Implicated in the release from host cell mediated by Vpu. Binds to RNA.</text>
</comment>
<comment type="function">
    <molecule>Capsid protein p24</molecule>
    <text evidence="5 7">Forms the conical core that encapsulates the genomic RNA-nucleocapsid complex in the virion. Most core are conical, with only 7% tubular. The core is constituted by capsid protein hexamer subunits. The core is disassembled soon after virion entry (By similarity). Host restriction factors such as TRIM5-alpha or TRIMCyp bind retroviral capsids and cause premature capsid disassembly, leading to blocks in reverse transcription. Capsid restriction by TRIM5 is one of the factors which restricts HIV-1 to the human species. Host PIN1 apparently facilitates the virion uncoating. On the other hand, interactions with PDZD8 or CYPA stabilize the capsid.</text>
</comment>
<comment type="function">
    <molecule>Nucleocapsid protein p7</molecule>
    <text evidence="5">Encapsulates and protects viral dimeric unspliced genomic RNA (gRNA). Binds these RNAs through its zinc fingers. Acts as a nucleic acid chaperone which is involved in rearangement of nucleic acid secondary structure during gRNA retrotranscription. Also facilitates template switch leading to recombination. As part of the polyprotein, participates in gRNA dimerization, packaging, tRNA incorporation and virion assembly.</text>
</comment>
<comment type="function">
    <molecule>Protease</molecule>
    <text evidence="5 10">Aspartyl protease that mediates proteolytic cleavages of Gag and Gag-Pol polyproteins during or shortly after the release of the virion from the plasma membrane. Cleavages take place as an ordered, step-wise cascade to yield mature proteins. This process is called maturation. Displays maximal activity during the budding process just prior to particle release from the cell. Also cleaves Nef and Vif, probably concomitantly with viral structural proteins on maturation of virus particles. Hydrolyzes host EIF4GI and PABP1 in order to shut off the capped cellular mRNA translation. The resulting inhibition of cellular protein synthesis serves to ensure maximal viral gene expression and to evade host immune response. Also mediates cleavage of host YTHDF3. Mediates cleavage of host CARD8, thereby activating the CARD8 inflammasome, leading to the clearance of latent HIV-1 in patient CD4(+) T-cells after viral reactivation; in contrast, HIV-1 can evade CARD8-sensing when its protease remains inactive in infected cells prior to viral budding (By similarity).</text>
</comment>
<comment type="function">
    <molecule>Reverse transcriptase/ribonuclease H</molecule>
    <text evidence="5">Multifunctional enzyme that converts the viral RNA genome into dsDNA in the cytoplasm, shortly after virus entry into the cell. This enzyme displays a DNA polymerase activity that can copy either DNA or RNA templates, and a ribonuclease H (RNase H) activity that cleaves the RNA strand of RNA-DNA heteroduplexes in a partially processive 3' to 5' endonucleasic mode. Conversion of viral genomic RNA into dsDNA requires many steps. A tRNA(3)-Lys binds to the primer-binding site (PBS) situated at the 5'-end of the viral RNA. RT uses the 3' end of the tRNA primer to perform a short round of RNA-dependent minus-strand DNA synthesis. The reading proceeds through the U5 region and ends after the repeated (R) region which is present at both ends of viral RNA. The portion of the RNA-DNA heteroduplex is digested by the RNase H, resulting in a ssDNA product attached to the tRNA primer. This ssDNA/tRNA hybridizes with the identical R region situated at the 3' end of viral RNA. This template exchange, known as minus-strand DNA strong stop transfer, can be either intra- or intermolecular. RT uses the 3' end of this newly synthesized short ssDNA to perform the RNA-dependent minus-strand DNA synthesis of the whole template. RNase H digests the RNA template except for two polypurine tracts (PPTs) situated at the 5'-end and near the center of the genome. It is not clear if both polymerase and RNase H activities are simultaneous. RNase H probably can proceed both in a polymerase-dependent (RNA cut into small fragments by the same RT performing DNA synthesis) and a polymerase-independent mode (cleavage of remaining RNA fragments by free RTs). Secondly, RT performs DNA-directed plus-strand DNA synthesis using the PPTs that have not been removed by RNase H as primers. PPTs and tRNA primers are then removed by RNase H. The 3' and 5' ssDNA PBS regions hybridize to form a circular dsDNA intermediate. Strand displacement synthesis by RT to the PBS and PPT ends produces a blunt ended, linear dsDNA copy of the viral genome that includes long terminal repeats (LTRs) at both ends.</text>
</comment>
<comment type="function">
    <molecule>Integrase</molecule>
    <text evidence="5">Catalyzes viral DNA integration into the host chromosome, by performing a series of DNA cutting and joining reactions. This enzyme activity takes place after virion entry into a cell and reverse transcription of the RNA genome in dsDNA. The first step in the integration process is 3' processing. This step requires a complex comprising the viral genome, matrix protein, Vpr and integrase. This complex is called the pre-integration complex (PIC). The integrase protein removes 2 nucleotides from each 3' end of the viral DNA, leaving recessed CA OH's at the 3' ends. In the second step, the PIC enters cell nucleus. This process is mediated through integrase and Vpr proteins, and allows the virus to infect a non dividing cell. This ability to enter the nucleus is specific of lentiviruses, other retroviruses cannot and rely on cell division to access cell chromosomes. In the third step, termed strand transfer, the integrase protein joins the previously processed 3' ends to the 5' ends of strands of target cellular DNA at the site of integration. The 5'-ends are produced by integrase-catalyzed staggered cuts, 5 bp apart. A Y-shaped, gapped, recombination intermediate results, with the 5'-ends of the viral DNA strands and the 3' ends of target DNA strands remaining unjoined, flanking a gap of 5 bp. The last step is viral DNA integration into host chromosome. This involves host DNA repair synthesis in which the 5 bp gaps between the unjoined strands are filled in and then ligated. Since this process occurs at both cuts flanking the HIV genome, a 5 bp duplication of host DNA is produced at the ends of HIV-1 integration. Alternatively, Integrase may catalyze the excision of viral DNA just after strand transfer, this is termed disintegration.</text>
</comment>
<comment type="catalytic activity">
    <reaction evidence="10">
        <text>Specific for a P1 residue that is hydrophobic, and P1' variable, but often Pro.</text>
        <dbReference type="EC" id="3.4.23.16"/>
    </reaction>
</comment>
<comment type="catalytic activity">
    <reaction evidence="1">
        <text>Endohydrolysis of RNA in RNA/DNA hybrids. Three different cleavage modes: 1. sequence-specific internal cleavage of RNA. Human immunodeficiency virus type 1 and Moloney murine leukemia virus enzymes prefer to cleave the RNA strand one nucleotide away from the RNA-DNA junction. 2. RNA 5'-end directed cleavage 13-19 nucleotides from the RNA end. 3. DNA 3'-end directed cleavage 15-20 nucleotides away from the primer terminus.</text>
        <dbReference type="EC" id="3.1.26.13"/>
    </reaction>
</comment>
<comment type="catalytic activity">
    <reaction evidence="1">
        <text>3'-end directed exonucleolytic cleavage of viral RNA-DNA hybrid.</text>
        <dbReference type="EC" id="3.1.13.2"/>
    </reaction>
</comment>
<comment type="catalytic activity">
    <reaction evidence="11">
        <text>DNA(n) + a 2'-deoxyribonucleoside 5'-triphosphate = DNA(n+1) + diphosphate</text>
        <dbReference type="Rhea" id="RHEA:22508"/>
        <dbReference type="Rhea" id="RHEA-COMP:17339"/>
        <dbReference type="Rhea" id="RHEA-COMP:17340"/>
        <dbReference type="ChEBI" id="CHEBI:33019"/>
        <dbReference type="ChEBI" id="CHEBI:61560"/>
        <dbReference type="ChEBI" id="CHEBI:173112"/>
        <dbReference type="EC" id="2.7.7.49"/>
    </reaction>
</comment>
<comment type="catalytic activity">
    <reaction evidence="11">
        <text>DNA(n) + a 2'-deoxyribonucleoside 5'-triphosphate = DNA(n+1) + diphosphate</text>
        <dbReference type="Rhea" id="RHEA:22508"/>
        <dbReference type="Rhea" id="RHEA-COMP:17339"/>
        <dbReference type="Rhea" id="RHEA-COMP:17340"/>
        <dbReference type="ChEBI" id="CHEBI:33019"/>
        <dbReference type="ChEBI" id="CHEBI:61560"/>
        <dbReference type="ChEBI" id="CHEBI:173112"/>
        <dbReference type="EC" id="2.7.7.7"/>
    </reaction>
</comment>
<comment type="cofactor">
    <cofactor evidence="1">
        <name>Mg(2+)</name>
        <dbReference type="ChEBI" id="CHEBI:18420"/>
    </cofactor>
    <text evidence="1">Binds 2 magnesium ions for reverse transcriptase polymerase activity.</text>
</comment>
<comment type="cofactor">
    <cofactor evidence="1">
        <name>Mg(2+)</name>
        <dbReference type="ChEBI" id="CHEBI:18420"/>
    </cofactor>
    <text evidence="1">Binds 2 magnesium ions for ribonuclease H (RNase H) activity. Substrate-binding is a precondition for magnesium binding.</text>
</comment>
<comment type="cofactor">
    <cofactor evidence="1">
        <name>Mg(2+)</name>
        <dbReference type="ChEBI" id="CHEBI:18420"/>
    </cofactor>
    <text evidence="1">Magnesium ions are required for integrase activity. Binds at least 1, maybe 2 magnesium ions.</text>
</comment>
<comment type="activity regulation">
    <text evidence="1">Protease: The viral protease is inhibited by many synthetic protease inhibitors (PIs), such as amprenavir, atazanavir, indinavir, loprinavir, nelfinavir, ritonavir and saquinavir. Use of protease inhibitors in tritherapy regimens permit more ambitious therapeutic strategies. Reverse transcriptase/ribonuclease H: RT can be inhibited either by nucleoside RT inhibitors (NRTIs) or by non nucleoside RT inhibitors (NNRTIs). NRTIs act as chain terminators, whereas NNRTIs inhibit DNA polymerization by binding a small hydrophobic pocket near the RT active site and inducing an allosteric change in this region. Classical NRTIs are abacavir, adefovir (PMEA), didanosine (ddI), lamivudine (3TC), stavudine (d4T), tenofovir (PMPA), zalcitabine (ddC), and zidovudine (AZT). Classical NNRTIs are atevirdine (BHAP U-87201E), delavirdine, efavirenz (DMP-266), emivirine (I-EBU), and nevirapine (BI-RG-587). The tritherapies used as a basic effective treatment of AIDS associate two NRTIs and one NNRTI.</text>
</comment>
<comment type="subunit">
    <molecule>Matrix protein p17</molecule>
    <text evidence="5 7">Homotrimer; further assembles as hexamers of trimers (By similarity). Interacts with gp41 (via C-terminus) (By similarity). Interacts with host CALM1; this interaction induces a conformational change in the Matrix protein, triggering exposure of the myristate group (By similarity). Interacts with host AP3D1; this interaction allows the polyprotein trafficking to multivesicular bodies during virus assembly (By similarity). Part of the pre-integration complex (PIC) which is composed of viral genome, matrix protein, Vpr and integrase (By similarity).</text>
</comment>
<comment type="subunit">
    <molecule>Capsid protein p24</molecule>
    <text evidence="5 7">Homodimer; the homodimer further multimerizes as homohexamers or homopentamers. Interacts with human PPIA/CYPA (By similarity); This interaction stabilizes the capsid. Interacts with human NUP153 (By similarity). Interacts with host PDZD8; this interaction stabilizes the capsid (By similarity). Interacts with monkey TRIM5; this interaction destabilizes the capsid (By similarity).</text>
</comment>
<comment type="subunit">
    <molecule>Protease</molecule>
    <text evidence="5 7">Homodimer, whose active site consists of two apposed aspartic acid residues.</text>
</comment>
<comment type="subunit">
    <molecule>Reverse transcriptase/ribonuclease H</molecule>
    <text evidence="3">Heterodimer of p66 RT and p51 RT (RT p66/p51) (By similarity). Heterodimerization of RT is essential for DNA polymerase activity (By similarity). The overall folding of the subdomains is similar in p66 RT and p51 RT but the spatial arrangements of the subdomains are dramatically different (By similarity).</text>
</comment>
<comment type="subunit">
    <molecule>Integrase</molecule>
    <text evidence="4 5 7">Homotetramer; may further associate as a homohexadecamer (By similarity). Part of the pre-integration complex (PIC) which is composed of viral genome, matrix protein, Vpr and integrase. Interacts with human SMARCB1/INI1 and human PSIP1/LEDGF isoform 1. Interacts with human KPNA3; this interaction might play a role in nuclear import of the pre-integration complex (By similarity). Interacts with human NUP153; this interaction might play a role in nuclear import of the pre-integration complex (By similarity).</text>
</comment>
<comment type="subcellular location">
    <molecule>Gag-Pol polyprotein</molecule>
    <subcellularLocation>
        <location>Host cell membrane</location>
        <topology>Lipid-anchor</topology>
    </subcellularLocation>
    <subcellularLocation>
        <location>Host endosome</location>
        <location>Host multivesicular body</location>
    </subcellularLocation>
    <text evidence="7">These locations are linked to virus assembly sites. The main location is the cell membrane, but under some circumstances, late endosomal compartments can serve as productive sites for virion assembly.</text>
</comment>
<comment type="subcellular location">
    <molecule>Matrix protein p17</molecule>
    <subcellularLocation>
        <location>Virion membrane</location>
        <topology evidence="18">Lipid-anchor</topology>
    </subcellularLocation>
    <subcellularLocation>
        <location evidence="1">Host nucleus</location>
    </subcellularLocation>
    <subcellularLocation>
        <location evidence="1">Host cytoplasm</location>
    </subcellularLocation>
</comment>
<comment type="subcellular location">
    <molecule>Capsid protein p24</molecule>
    <subcellularLocation>
        <location evidence="18">Virion</location>
    </subcellularLocation>
</comment>
<comment type="subcellular location">
    <molecule>Nucleocapsid protein p7</molecule>
    <subcellularLocation>
        <location evidence="18">Virion</location>
    </subcellularLocation>
</comment>
<comment type="subcellular location">
    <molecule>Reverse transcriptase/ribonuclease H</molecule>
    <subcellularLocation>
        <location evidence="18">Virion</location>
    </subcellularLocation>
</comment>
<comment type="subcellular location">
    <molecule>Integrase</molecule>
    <subcellularLocation>
        <location evidence="18">Virion</location>
    </subcellularLocation>
    <subcellularLocation>
        <location evidence="18">Host nucleus</location>
    </subcellularLocation>
    <subcellularLocation>
        <location evidence="18">Host cytoplasm</location>
    </subcellularLocation>
    <text evidence="18">Nuclear at initial phase, cytoplasmic at assembly.</text>
</comment>
<comment type="alternative products">
    <event type="ribosomal frameshifting"/>
    <isoform>
        <id>Q73368-1</id>
        <name>Gag-Pol polyprotein</name>
        <sequence type="displayed"/>
    </isoform>
    <isoform>
        <id>Q73367-1</id>
        <name>Gag polyprotein</name>
        <sequence type="external"/>
    </isoform>
    <text>Translation results in the formation of the Gag polyprotein most of the time. Ribosomal frameshifting at the gag-pol genes boundary occurs at low frequency and produces the Gag-Pol polyprotein. This strategy of translation probably allows the virus to modulate the quantity of each viral protein. Maintenance of a correct Gag to Gag-Pol ratio is essential for RNA dimerization and viral infectivity.</text>
</comment>
<comment type="domain">
    <molecule>Reverse transcriptase/ribonuclease H</molecule>
    <text evidence="1">RT is structured in five subdomains: finger, palm, thumb, connection and RNase H. Within the palm subdomain, the 'primer grip' region is thought to be involved in the positioning of the primer terminus for accommodating the incoming nucleotide. The RNase H domain stabilizes the association of RT with primer-template.</text>
</comment>
<comment type="domain">
    <molecule>Reverse transcriptase/ribonuclease H</molecule>
    <text evidence="1">The tryptophan repeat motif is involved in RT p66/p51 dimerization (By similarity).</text>
</comment>
<comment type="domain">
    <molecule>Integrase</molecule>
    <text evidence="1">The core domain contains the D-x(n)-D-x(35)-E motif, named for the phylogenetically conserved glutamic acid and aspartic acid residues and the invariant 35 amino acid spacing between the second and third acidic residues. Each acidic residue of the D,D(35)E motif is independently essential for the 3'-processing and strand transfer activities of purified integrase protein.</text>
</comment>
<comment type="PTM">
    <molecule>Gag-Pol polyprotein</molecule>
    <text evidence="5 11">Specific enzymatic cleavages by the viral protease yield mature proteins. The protease is released by autocatalytic cleavage. The polyprotein is cleaved during and after budding, this process is termed maturation. Proteolytic cleavage of p66 RT removes the RNase H domain to yield the p51 RT subunit. Nucleocapsid protein p7 might be further cleaved after virus entry.</text>
</comment>
<comment type="PTM">
    <molecule>Matrix protein p17</molecule>
    <text evidence="5">Tyrosine phosphorylated presumably in the virion by a host kinase. Phosphorylation is apparently not a major regulator of membrane association.</text>
</comment>
<comment type="PTM">
    <molecule>Capsid protein p24</molecule>
    <text evidence="6">Phosphorylated possibly by host MAPK1; this phosphorylation is necessary for Pin1-mediated virion uncoating.</text>
</comment>
<comment type="PTM">
    <molecule>Nucleocapsid protein p7</molecule>
    <text evidence="2">Methylated by host PRMT6, impairing its function by reducing RNA annealing and the initiation of reverse transcription.</text>
</comment>
<comment type="miscellaneous">
    <molecule>Reverse transcriptase/ribonuclease H</molecule>
    <text evidence="1">Error-prone enzyme that lacks a proof-reading function. High mutations rate is a direct consequence of this characteristic. RT also displays frequent template switching leading to high recombination rate. Recombination mostly occurs between homologous regions of the two copackaged RNA genomes. If these two RNA molecules derive from different viral strains, reverse transcription will give rise to highly recombinated proviral DNAs.</text>
</comment>
<comment type="miscellaneous">
    <text>HIV-1 lineages are divided in three main groups, M (for Major), O (for Outlier), and N (for New, or Non-M, Non-O). The vast majority of strains found worldwide belong to the group M. Group O seems to be endemic to and largely confined to Cameroon and neighboring countries in West Central Africa, where these viruses represent a small minority of HIV-1 strains. The group N is represented by a limited number of isolates from Cameroonian persons. The group M is further subdivided in 9 clades or subtypes (A to D, F to H, J and K).</text>
</comment>
<comment type="miscellaneous">
    <text>Resistance to inhibitors associated with mutations are observed both in viral protease and in reverse transcriptase. Most of the time, single mutations confer only a modest reduction in drug susceptibility. Combination of several mutations is usually required to develop a high-level drug resistance. These mutations are predominantly found in clade B viruses and not in other genotypes. They are listed in the clade B representative isolate HXB2 (AC P04585).</text>
</comment>
<comment type="miscellaneous">
    <molecule>Isoform Gag-Pol polyprotein</molecule>
    <text>Produced by -1 ribosomal frameshifting.</text>
</comment>
<comment type="online information" name="HIV drug resistance mutations">
    <link uri="https://www.iasusa.org/hiv-drug-resistance/hiv-drug-resistance-mutations/"/>
</comment>
<comment type="online information" name="hivdb">
    <link uri="https://hivdb.stanford.edu"/>
    <text>HIV drug resistance database</text>
</comment>